<comment type="function">
    <text evidence="5">Suppresses cell growth when expressed ectopically.</text>
</comment>
<comment type="subcellular location">
    <subcellularLocation>
        <location evidence="5">Nucleus</location>
    </subcellularLocation>
</comment>
<comment type="tissue specificity">
    <text evidence="5">Highest expression observed in spleen and thymus with moderate levels in bone marrow, lung, skin and heart, low levels in muscle, liver and intestine and little or no expression in brain and pancreas.</text>
</comment>
<comment type="induction">
    <text evidence="5">By interferon-alpha and interferon-beta.</text>
</comment>
<comment type="polymorphism">
    <text evidence="5">This gene is present in strains 129/J, 129/SvJ, BALB/cAn, BALB/cJ, BALB/cHeA, CBA/N, C3H/HeJ, C3H/HeN, C57BL/6J, C57BL/10SnJ, C57L/J, NOD and NZW/LacJ but is absent in strains 129S6/SvEvTac, AKR/N, A/J, DBA/2J, NON, NZB/BlNJ, P/J, SENCARA/Pt, SWR/J and STS/A.</text>
</comment>
<comment type="similarity">
    <text evidence="1">Belongs to the HIN-200 family.</text>
</comment>
<dbReference type="EMBL" id="FJ594740">
    <property type="protein sequence ID" value="ACT83572.1"/>
    <property type="molecule type" value="mRNA"/>
</dbReference>
<dbReference type="EMBL" id="FJ594741">
    <property type="protein sequence ID" value="ACT83573.1"/>
    <property type="molecule type" value="mRNA"/>
</dbReference>
<dbReference type="EMBL" id="AC170584">
    <property type="status" value="NOT_ANNOTATED_CDS"/>
    <property type="molecule type" value="Genomic_DNA"/>
</dbReference>
<dbReference type="CCDS" id="CCDS48452.1"/>
<dbReference type="RefSeq" id="NP_001164324.1">
    <property type="nucleotide sequence ID" value="NM_001170853.1"/>
</dbReference>
<dbReference type="RefSeq" id="NP_001387250.1">
    <property type="nucleotide sequence ID" value="NM_001400321.1"/>
</dbReference>
<dbReference type="RefSeq" id="NP_001387251.1">
    <property type="nucleotide sequence ID" value="NM_001400322.1"/>
</dbReference>
<dbReference type="RefSeq" id="XP_011237034.1">
    <property type="nucleotide sequence ID" value="XM_011238732.1"/>
</dbReference>
<dbReference type="RefSeq" id="XP_011237035.1">
    <property type="nucleotide sequence ID" value="XM_011238733.2"/>
</dbReference>
<dbReference type="RefSeq" id="XP_036021529.1">
    <property type="nucleotide sequence ID" value="XM_036165636.1"/>
</dbReference>
<dbReference type="RefSeq" id="XP_036021571.1">
    <property type="nucleotide sequence ID" value="XM_036165678.1"/>
</dbReference>
<dbReference type="RefSeq" id="XP_036021612.1">
    <property type="nucleotide sequence ID" value="XM_036165719.1"/>
</dbReference>
<dbReference type="SMR" id="D0QMC3"/>
<dbReference type="FunCoup" id="D0QMC3">
    <property type="interactions" value="132"/>
</dbReference>
<dbReference type="STRING" id="10090.ENSMUSP00000140610"/>
<dbReference type="GlyGen" id="D0QMC3">
    <property type="glycosylation" value="1 site"/>
</dbReference>
<dbReference type="iPTMnet" id="D0QMC3"/>
<dbReference type="PhosphoSitePlus" id="D0QMC3"/>
<dbReference type="SwissPalm" id="D0QMC3"/>
<dbReference type="jPOST" id="D0QMC3"/>
<dbReference type="PaxDb" id="10090-ENSMUSP00000140610"/>
<dbReference type="PeptideAtlas" id="D0QMC3"/>
<dbReference type="ProteomicsDB" id="290268"/>
<dbReference type="Ensembl" id="ENSMUST00000188804.7">
    <property type="protein sequence ID" value="ENSMUSP00000140610.2"/>
    <property type="gene ID" value="ENSMUSG00000090272.10"/>
</dbReference>
<dbReference type="GeneID" id="100040462"/>
<dbReference type="KEGG" id="mmu:100040462"/>
<dbReference type="UCSC" id="uc007drz.2">
    <property type="organism name" value="mouse"/>
</dbReference>
<dbReference type="AGR" id="MGI:3780953"/>
<dbReference type="CTD" id="100040462"/>
<dbReference type="MGI" id="MGI:3780953">
    <property type="gene designation" value="Mndal"/>
</dbReference>
<dbReference type="VEuPathDB" id="HostDB:ENSMUSG00000090272"/>
<dbReference type="eggNOG" id="ENOG502QTQS">
    <property type="taxonomic scope" value="Eukaryota"/>
</dbReference>
<dbReference type="GeneTree" id="ENSGT00390000013296"/>
<dbReference type="InParanoid" id="D0QMC3"/>
<dbReference type="OMA" id="TENQIMX"/>
<dbReference type="OrthoDB" id="9836166at2759"/>
<dbReference type="PhylomeDB" id="D0QMC3"/>
<dbReference type="TreeFam" id="TF337385"/>
<dbReference type="Reactome" id="R-MMU-6798695">
    <property type="pathway name" value="Neutrophil degranulation"/>
</dbReference>
<dbReference type="BioGRID-ORCS" id="100040462">
    <property type="hits" value="2 hits in 76 CRISPR screens"/>
</dbReference>
<dbReference type="ChiTaRS" id="Mndal">
    <property type="organism name" value="mouse"/>
</dbReference>
<dbReference type="PRO" id="PR:D0QMC3"/>
<dbReference type="Proteomes" id="UP000000589">
    <property type="component" value="Chromosome 1"/>
</dbReference>
<dbReference type="RNAct" id="D0QMC3">
    <property type="molecule type" value="protein"/>
</dbReference>
<dbReference type="Bgee" id="ENSMUSG00000090272">
    <property type="expression patterns" value="Expressed in peripheral lymph node and 153 other cell types or tissues"/>
</dbReference>
<dbReference type="ExpressionAtlas" id="D0QMC3">
    <property type="expression patterns" value="baseline and differential"/>
</dbReference>
<dbReference type="GO" id="GO:0005634">
    <property type="term" value="C:nucleus"/>
    <property type="evidence" value="ECO:0000314"/>
    <property type="project" value="UniProtKB"/>
</dbReference>
<dbReference type="GO" id="GO:0002218">
    <property type="term" value="P:activation of innate immune response"/>
    <property type="evidence" value="ECO:0007669"/>
    <property type="project" value="InterPro"/>
</dbReference>
<dbReference type="GO" id="GO:0035458">
    <property type="term" value="P:cellular response to interferon-beta"/>
    <property type="evidence" value="ECO:0007669"/>
    <property type="project" value="InterPro"/>
</dbReference>
<dbReference type="GO" id="GO:0030308">
    <property type="term" value="P:negative regulation of cell growth"/>
    <property type="evidence" value="ECO:0000315"/>
    <property type="project" value="UniProtKB"/>
</dbReference>
<dbReference type="CDD" id="cd08305">
    <property type="entry name" value="Pyrin"/>
    <property type="match status" value="1"/>
</dbReference>
<dbReference type="FunFam" id="1.10.533.10:FF:000011">
    <property type="entry name" value="Myeloid cell nuclear differentiation antigen"/>
    <property type="match status" value="1"/>
</dbReference>
<dbReference type="FunFam" id="2.40.50.140:FF:000101">
    <property type="entry name" value="Myeloid cell nuclear differentiation antigen"/>
    <property type="match status" value="1"/>
</dbReference>
<dbReference type="FunFam" id="2.40.50.140:FF:000105">
    <property type="entry name" value="Myeloid cell nuclear differentiation antigen"/>
    <property type="match status" value="1"/>
</dbReference>
<dbReference type="Gene3D" id="1.10.533.10">
    <property type="entry name" value="Death Domain, Fas"/>
    <property type="match status" value="1"/>
</dbReference>
<dbReference type="Gene3D" id="2.40.50.140">
    <property type="entry name" value="Nucleic acid-binding proteins"/>
    <property type="match status" value="2"/>
</dbReference>
<dbReference type="InterPro" id="IPR004020">
    <property type="entry name" value="DAPIN"/>
</dbReference>
<dbReference type="InterPro" id="IPR011029">
    <property type="entry name" value="DEATH-like_dom_sf"/>
</dbReference>
<dbReference type="InterPro" id="IPR040205">
    <property type="entry name" value="HIN-200"/>
</dbReference>
<dbReference type="InterPro" id="IPR004021">
    <property type="entry name" value="HIN200/IF120x"/>
</dbReference>
<dbReference type="InterPro" id="IPR012340">
    <property type="entry name" value="NA-bd_OB-fold"/>
</dbReference>
<dbReference type="PANTHER" id="PTHR12200">
    <property type="entry name" value="INTERFERON-INDUCIBLE PROTEIN AIM2 FAMILY MEMBER"/>
    <property type="match status" value="1"/>
</dbReference>
<dbReference type="PANTHER" id="PTHR12200:SF25">
    <property type="entry name" value="PYRIN AND HIN DOMAIN-CONTAINING PROTEIN 1"/>
    <property type="match status" value="1"/>
</dbReference>
<dbReference type="Pfam" id="PF02760">
    <property type="entry name" value="HIN"/>
    <property type="match status" value="1"/>
</dbReference>
<dbReference type="Pfam" id="PF02758">
    <property type="entry name" value="PYRIN"/>
    <property type="match status" value="1"/>
</dbReference>
<dbReference type="SMART" id="SM01289">
    <property type="entry name" value="PYRIN"/>
    <property type="match status" value="1"/>
</dbReference>
<dbReference type="SUPFAM" id="SSF47986">
    <property type="entry name" value="DEATH domain"/>
    <property type="match status" value="1"/>
</dbReference>
<dbReference type="SUPFAM" id="SSF159141">
    <property type="entry name" value="HIN-2000 domain-like"/>
    <property type="match status" value="2"/>
</dbReference>
<dbReference type="PROSITE" id="PS50824">
    <property type="entry name" value="DAPIN"/>
    <property type="match status" value="1"/>
</dbReference>
<dbReference type="PROSITE" id="PS50834">
    <property type="entry name" value="HIN_200"/>
    <property type="match status" value="1"/>
</dbReference>
<protein>
    <recommendedName>
        <fullName evidence="6">Myeloid cell nuclear differentiation antigen-like protein</fullName>
    </recommendedName>
</protein>
<evidence type="ECO:0000255" key="1"/>
<evidence type="ECO:0000255" key="2">
    <source>
        <dbReference type="PROSITE-ProRule" id="PRU00061"/>
    </source>
</evidence>
<evidence type="ECO:0000255" key="3">
    <source>
        <dbReference type="PROSITE-ProRule" id="PRU00106"/>
    </source>
</evidence>
<evidence type="ECO:0000256" key="4">
    <source>
        <dbReference type="SAM" id="MobiDB-lite"/>
    </source>
</evidence>
<evidence type="ECO:0000269" key="5">
    <source>
    </source>
</evidence>
<evidence type="ECO:0000303" key="6">
    <source>
    </source>
</evidence>
<evidence type="ECO:0000305" key="7"/>
<evidence type="ECO:0000312" key="8">
    <source>
        <dbReference type="EMBL" id="ACT83572.1"/>
    </source>
</evidence>
<evidence type="ECO:0000312" key="9">
    <source>
        <dbReference type="EMBL" id="ACT83573.1"/>
    </source>
</evidence>
<gene>
    <name evidence="6" type="primary">Mndal</name>
</gene>
<feature type="chain" id="PRO_0000391681" description="Myeloid cell nuclear differentiation antigen-like protein">
    <location>
        <begin position="1"/>
        <end position="538"/>
    </location>
</feature>
<feature type="domain" description="Pyrin" evidence="2">
    <location>
        <begin position="1"/>
        <end position="87"/>
    </location>
</feature>
<feature type="domain" description="HIN-200" evidence="3">
    <location>
        <begin position="299"/>
        <end position="499"/>
    </location>
</feature>
<feature type="region of interest" description="Disordered" evidence="4">
    <location>
        <begin position="120"/>
        <end position="306"/>
    </location>
</feature>
<feature type="compositionally biased region" description="Basic and acidic residues" evidence="4">
    <location>
        <begin position="135"/>
        <end position="153"/>
    </location>
</feature>
<feature type="compositionally biased region" description="Basic and acidic residues" evidence="4">
    <location>
        <begin position="245"/>
        <end position="262"/>
    </location>
</feature>
<feature type="compositionally biased region" description="Low complexity" evidence="4">
    <location>
        <begin position="276"/>
        <end position="305"/>
    </location>
</feature>
<feature type="sequence variant" description="In strain: BALB/cAn." evidence="5">
    <original>K</original>
    <variation>N</variation>
    <location>
        <position position="6"/>
    </location>
</feature>
<feature type="sequence variant" description="In strain: BALB/cAn." evidence="5">
    <original>Y</original>
    <variation>D</variation>
    <location>
        <position position="58"/>
    </location>
</feature>
<feature type="sequence variant" description="In strain: BALB/cAn." evidence="5">
    <original>V</original>
    <variation>G</variation>
    <location>
        <position position="100"/>
    </location>
</feature>
<feature type="sequence variant" description="In strain: BALB/cAn." evidence="5">
    <original>G</original>
    <variation>R</variation>
    <location>
        <position position="131"/>
    </location>
</feature>
<feature type="sequence variant" description="In strain: BALB/cAn." evidence="5">
    <original>R</original>
    <variation>M</variation>
    <location>
        <position position="245"/>
    </location>
</feature>
<feature type="sequence variant" description="In strain: BALB/cAn." evidence="5">
    <original>P</original>
    <variation>S</variation>
    <location>
        <position position="297"/>
    </location>
</feature>
<feature type="sequence variant" description="In strain: BALB/cAn." evidence="5">
    <original>D</original>
    <variation>E</variation>
    <location>
        <position position="324"/>
    </location>
</feature>
<feature type="sequence variant" description="In strain: BALB/cAn." evidence="5">
    <original>F</original>
    <variation>L</variation>
    <location>
        <position position="339"/>
    </location>
</feature>
<feature type="sequence variant" description="In strain: BALB/cAn." evidence="5">
    <original>K</original>
    <variation>T</variation>
    <location>
        <position position="436"/>
    </location>
</feature>
<feature type="sequence variant" description="In strain: BALB/cAn." evidence="5">
    <original>KTQ</original>
    <variation>NRK</variation>
    <location>
        <begin position="438"/>
        <end position="440"/>
    </location>
</feature>
<feature type="sequence variant" description="In strain: BALB/cAn." evidence="5">
    <original>S</original>
    <variation>I</variation>
    <location>
        <position position="443"/>
    </location>
</feature>
<feature type="sequence variant" description="In strain: BALB/cAn." evidence="5">
    <original>E</original>
    <variation>V</variation>
    <location>
        <position position="456"/>
    </location>
</feature>
<feature type="sequence variant" description="In strain: BALB/cAn." evidence="5">
    <original>G</original>
    <variation>R</variation>
    <location>
        <position position="459"/>
    </location>
</feature>
<feature type="sequence variant" description="In strain: BALB/cAn." evidence="5">
    <original>R</original>
    <variation>S</variation>
    <location>
        <position position="483"/>
    </location>
</feature>
<feature type="sequence variant" description="In strain: BALB/cAn." evidence="5">
    <original>V</original>
    <variation>I</variation>
    <location>
        <position position="496"/>
    </location>
</feature>
<feature type="sequence variant" description="In strain: BALB/cAn." evidence="5">
    <original>N</original>
    <variation>D</variation>
    <location>
        <position position="523"/>
    </location>
</feature>
<name>MNDAL_MOUSE</name>
<sequence length="538" mass="60526">MAEYKKIVLLKGLESMEDYQFRTVKSLLRKELKLTKKLQEDYDRIQLADWMEDKFPKYAGLDKLIKVCEHIKDLKDLAKKLKTEKAKVQKKKQGKCKTAVKKKGQDELSSSESLFINKESYKSVPSSKKKGKAIAKTEGEKKNKLTQDQDHLPETSGTDIKTEEDCLQNSPKPPPTSPSSSSNKKKRKEITKTEGGKKKKLTQEQAQLPEPLGTDIKKDEDCLQTPPKPPPTPPSSSLNKKRKSRREEETGVKKSKAAKEPDQPPCCEEPTARCQSPILHSSSSASSNIPSATNQKPQPQNQNIPRGAVLHSEPLTVMVLTATDPFEYESPEHEVKNMFHATVATVSQYFHVKVFNINLKEKFTKKNFIIISNYFESKGILEINETSSVLKADPDQMIEVPNNIIRNANASPKICDIQKGTSGAVFYGVFTLHKKKVKTQNTSYEIKDGSGSIEVEGSGQWHNINCKEGDKLHLFCFHLKRERGQPKLVCGDHSFVKIKVTKAGKKKEASTVLSSTKNEEENNYPKDGIKVEMPDYHV</sequence>
<proteinExistence type="evidence at protein level"/>
<reference evidence="7 8" key="1">
    <citation type="journal article" date="2009" name="Blood">
        <title>Mndal, a new interferon-inducible family member, is highly polymorphic, suppresses cell growth, and may modify plasmacytoma susceptibility.</title>
        <authorList>
            <person name="Zhang K."/>
            <person name="Kagan D."/>
            <person name="DuBois W."/>
            <person name="Robinson R."/>
            <person name="Bliskovsky V."/>
            <person name="Vass W.C."/>
            <person name="Zhang S."/>
            <person name="Mock B.A."/>
        </authorList>
    </citation>
    <scope>NUCLEOTIDE SEQUENCE [MRNA]</scope>
    <scope>FUNCTION</scope>
    <scope>SUBCELLULAR LOCATION</scope>
    <scope>TISSUE SPECIFICITY</scope>
    <scope>INDUCTION</scope>
    <scope>POLYMORPHISM</scope>
    <scope>VARIANTS ASN-6; ASP-58; GLY-100; ARG-131; MET-245; SER-297; GLU-324; LEU-339; THR-436; 438-LYS--GLN-440 DELINS ASN-ARG-LYS; ILE-443; VAL-456; ARG-459; SER-483; ILE-496 AND ASP-523</scope>
    <source>
        <strain evidence="9">BALB/cAn</strain>
        <strain evidence="8">C57BL/6J</strain>
        <tissue evidence="9">Spleen</tissue>
    </source>
</reference>
<reference evidence="7" key="2">
    <citation type="journal article" date="2009" name="PLoS Biol.">
        <title>Lineage-specific biology revealed by a finished genome assembly of the mouse.</title>
        <authorList>
            <person name="Church D.M."/>
            <person name="Goodstadt L."/>
            <person name="Hillier L.W."/>
            <person name="Zody M.C."/>
            <person name="Goldstein S."/>
            <person name="She X."/>
            <person name="Bult C.J."/>
            <person name="Agarwala R."/>
            <person name="Cherry J.L."/>
            <person name="DiCuccio M."/>
            <person name="Hlavina W."/>
            <person name="Kapustin Y."/>
            <person name="Meric P."/>
            <person name="Maglott D."/>
            <person name="Birtle Z."/>
            <person name="Marques A.C."/>
            <person name="Graves T."/>
            <person name="Zhou S."/>
            <person name="Teague B."/>
            <person name="Potamousis K."/>
            <person name="Churas C."/>
            <person name="Place M."/>
            <person name="Herschleb J."/>
            <person name="Runnheim R."/>
            <person name="Forrest D."/>
            <person name="Amos-Landgraf J."/>
            <person name="Schwartz D.C."/>
            <person name="Cheng Z."/>
            <person name="Lindblad-Toh K."/>
            <person name="Eichler E.E."/>
            <person name="Ponting C.P."/>
        </authorList>
    </citation>
    <scope>NUCLEOTIDE SEQUENCE [LARGE SCALE GENOMIC DNA]</scope>
    <source>
        <strain>C57BL/6J</strain>
    </source>
</reference>
<reference key="3">
    <citation type="journal article" date="2009" name="Immunity">
        <title>The phagosomal proteome in interferon-gamma-activated macrophages.</title>
        <authorList>
            <person name="Trost M."/>
            <person name="English L."/>
            <person name="Lemieux S."/>
            <person name="Courcelles M."/>
            <person name="Desjardins M."/>
            <person name="Thibault P."/>
        </authorList>
    </citation>
    <scope>IDENTIFICATION BY MASS SPECTROMETRY [LARGE SCALE ANALYSIS]</scope>
</reference>
<keyword id="KW-0341">Growth regulation</keyword>
<keyword id="KW-0539">Nucleus</keyword>
<keyword id="KW-1185">Reference proteome</keyword>
<organism>
    <name type="scientific">Mus musculus</name>
    <name type="common">Mouse</name>
    <dbReference type="NCBI Taxonomy" id="10090"/>
    <lineage>
        <taxon>Eukaryota</taxon>
        <taxon>Metazoa</taxon>
        <taxon>Chordata</taxon>
        <taxon>Craniata</taxon>
        <taxon>Vertebrata</taxon>
        <taxon>Euteleostomi</taxon>
        <taxon>Mammalia</taxon>
        <taxon>Eutheria</taxon>
        <taxon>Euarchontoglires</taxon>
        <taxon>Glires</taxon>
        <taxon>Rodentia</taxon>
        <taxon>Myomorpha</taxon>
        <taxon>Muroidea</taxon>
        <taxon>Muridae</taxon>
        <taxon>Murinae</taxon>
        <taxon>Mus</taxon>
        <taxon>Mus</taxon>
    </lineage>
</organism>
<accession>D0QMC3</accession>
<accession>D0QMC4</accession>